<sequence>MAHKKAGGSSRNGRDSESKRLGVKVYGGQAINAGGIIVRQRGTRMHAGENVGMGKDHTLFALVDGHVKFTTKGAAKKHTVVVVPAAA</sequence>
<organism>
    <name type="scientific">Burkholderia mallei (strain NCTC 10229)</name>
    <dbReference type="NCBI Taxonomy" id="412022"/>
    <lineage>
        <taxon>Bacteria</taxon>
        <taxon>Pseudomonadati</taxon>
        <taxon>Pseudomonadota</taxon>
        <taxon>Betaproteobacteria</taxon>
        <taxon>Burkholderiales</taxon>
        <taxon>Burkholderiaceae</taxon>
        <taxon>Burkholderia</taxon>
        <taxon>pseudomallei group</taxon>
    </lineage>
</organism>
<reference key="1">
    <citation type="journal article" date="2010" name="Genome Biol. Evol.">
        <title>Continuing evolution of Burkholderia mallei through genome reduction and large-scale rearrangements.</title>
        <authorList>
            <person name="Losada L."/>
            <person name="Ronning C.M."/>
            <person name="DeShazer D."/>
            <person name="Woods D."/>
            <person name="Fedorova N."/>
            <person name="Kim H.S."/>
            <person name="Shabalina S.A."/>
            <person name="Pearson T.R."/>
            <person name="Brinkac L."/>
            <person name="Tan P."/>
            <person name="Nandi T."/>
            <person name="Crabtree J."/>
            <person name="Badger J."/>
            <person name="Beckstrom-Sternberg S."/>
            <person name="Saqib M."/>
            <person name="Schutzer S.E."/>
            <person name="Keim P."/>
            <person name="Nierman W.C."/>
        </authorList>
    </citation>
    <scope>NUCLEOTIDE SEQUENCE [LARGE SCALE GENOMIC DNA]</scope>
    <source>
        <strain>NCTC 10229</strain>
    </source>
</reference>
<accession>A2S5R9</accession>
<name>RL27_BURM9</name>
<dbReference type="EMBL" id="CP000546">
    <property type="protein sequence ID" value="ABN02362.1"/>
    <property type="molecule type" value="Genomic_DNA"/>
</dbReference>
<dbReference type="RefSeq" id="WP_004194025.1">
    <property type="nucleotide sequence ID" value="NC_008836.1"/>
</dbReference>
<dbReference type="SMR" id="A2S5R9"/>
<dbReference type="GeneID" id="93061604"/>
<dbReference type="KEGG" id="bml:BMA10229_A1304"/>
<dbReference type="HOGENOM" id="CLU_095424_4_1_4"/>
<dbReference type="Proteomes" id="UP000002283">
    <property type="component" value="Chromosome I"/>
</dbReference>
<dbReference type="GO" id="GO:0022625">
    <property type="term" value="C:cytosolic large ribosomal subunit"/>
    <property type="evidence" value="ECO:0007669"/>
    <property type="project" value="TreeGrafter"/>
</dbReference>
<dbReference type="GO" id="GO:0003735">
    <property type="term" value="F:structural constituent of ribosome"/>
    <property type="evidence" value="ECO:0007669"/>
    <property type="project" value="InterPro"/>
</dbReference>
<dbReference type="GO" id="GO:0006412">
    <property type="term" value="P:translation"/>
    <property type="evidence" value="ECO:0007669"/>
    <property type="project" value="UniProtKB-UniRule"/>
</dbReference>
<dbReference type="FunFam" id="2.40.50.100:FF:000001">
    <property type="entry name" value="50S ribosomal protein L27"/>
    <property type="match status" value="1"/>
</dbReference>
<dbReference type="Gene3D" id="2.40.50.100">
    <property type="match status" value="1"/>
</dbReference>
<dbReference type="HAMAP" id="MF_00539">
    <property type="entry name" value="Ribosomal_bL27"/>
    <property type="match status" value="1"/>
</dbReference>
<dbReference type="InterPro" id="IPR001684">
    <property type="entry name" value="Ribosomal_bL27"/>
</dbReference>
<dbReference type="InterPro" id="IPR018261">
    <property type="entry name" value="Ribosomal_bL27_CS"/>
</dbReference>
<dbReference type="NCBIfam" id="TIGR00062">
    <property type="entry name" value="L27"/>
    <property type="match status" value="1"/>
</dbReference>
<dbReference type="PANTHER" id="PTHR15893:SF0">
    <property type="entry name" value="LARGE RIBOSOMAL SUBUNIT PROTEIN BL27M"/>
    <property type="match status" value="1"/>
</dbReference>
<dbReference type="PANTHER" id="PTHR15893">
    <property type="entry name" value="RIBOSOMAL PROTEIN L27"/>
    <property type="match status" value="1"/>
</dbReference>
<dbReference type="Pfam" id="PF01016">
    <property type="entry name" value="Ribosomal_L27"/>
    <property type="match status" value="1"/>
</dbReference>
<dbReference type="PRINTS" id="PR00063">
    <property type="entry name" value="RIBOSOMALL27"/>
</dbReference>
<dbReference type="SUPFAM" id="SSF110324">
    <property type="entry name" value="Ribosomal L27 protein-like"/>
    <property type="match status" value="1"/>
</dbReference>
<dbReference type="PROSITE" id="PS00831">
    <property type="entry name" value="RIBOSOMAL_L27"/>
    <property type="match status" value="1"/>
</dbReference>
<evidence type="ECO:0000255" key="1">
    <source>
        <dbReference type="HAMAP-Rule" id="MF_00539"/>
    </source>
</evidence>
<evidence type="ECO:0000256" key="2">
    <source>
        <dbReference type="SAM" id="MobiDB-lite"/>
    </source>
</evidence>
<evidence type="ECO:0000305" key="3"/>
<proteinExistence type="inferred from homology"/>
<gene>
    <name evidence="1" type="primary">rpmA</name>
    <name type="ordered locus">BMA10229_A1304</name>
</gene>
<protein>
    <recommendedName>
        <fullName evidence="1">Large ribosomal subunit protein bL27</fullName>
    </recommendedName>
    <alternativeName>
        <fullName evidence="3">50S ribosomal protein L27</fullName>
    </alternativeName>
</protein>
<feature type="chain" id="PRO_1000017430" description="Large ribosomal subunit protein bL27">
    <location>
        <begin position="1"/>
        <end position="87"/>
    </location>
</feature>
<feature type="region of interest" description="Disordered" evidence="2">
    <location>
        <begin position="1"/>
        <end position="21"/>
    </location>
</feature>
<keyword id="KW-0687">Ribonucleoprotein</keyword>
<keyword id="KW-0689">Ribosomal protein</keyword>
<comment type="similarity">
    <text evidence="1">Belongs to the bacterial ribosomal protein bL27 family.</text>
</comment>